<protein>
    <recommendedName>
        <fullName evidence="1">4-hydroxy-3-methylbut-2-en-1-yl diphosphate synthase (flavodoxin)</fullName>
        <ecNumber evidence="1">1.17.7.3</ecNumber>
    </recommendedName>
    <alternativeName>
        <fullName evidence="1">1-hydroxy-2-methyl-2-(E)-butenyl 4-diphosphate synthase</fullName>
    </alternativeName>
</protein>
<sequence length="373" mass="40139">MSEILHRSLTRPVRVGNLIIGGSNEVIIQSMTTTKTHDVEATVAEIKRLEEAGCQVVRVACPDERAADALAEIKSRINIPLVVDIHFDYKLALKAIESGVDKIRINPGNIGRREKVEAVVNAAKAKGIPIRIGVNAGSLEKQFLEKYGYPTAQGMVESAMHHVKILEDLGFYNTIISLKASDVNLALEAYTLAAKTFDYPLHVGITESGPLFSGSLKSAAGLGAILSLGIGSTVRVSLSDDPVEEVKVAKEVLKSFGLAANAATLISCPTCGRIEIDLISIAKEVEEYIQNINVNIKVAVLGCAVNGPGEAREADIGIAGARNEGLLFRHGKIIRKVPEATMVEELKKEIDAIAAEKMAEREREEQELANQSN</sequence>
<reference key="1">
    <citation type="journal article" date="2011" name="J. Bacteriol.">
        <title>Complete genome sequence of the Thermophilic Bacterium Exiguobacterium sp. AT1b.</title>
        <authorList>
            <person name="Vishnivetskaya T.A."/>
            <person name="Lucas S."/>
            <person name="Copeland A."/>
            <person name="Lapidus A."/>
            <person name="Glavina del Rio T."/>
            <person name="Dalin E."/>
            <person name="Tice H."/>
            <person name="Bruce D.C."/>
            <person name="Goodwin L.A."/>
            <person name="Pitluck S."/>
            <person name="Saunders E."/>
            <person name="Brettin T."/>
            <person name="Detter C."/>
            <person name="Han C."/>
            <person name="Larimer F."/>
            <person name="Land M.L."/>
            <person name="Hauser L.J."/>
            <person name="Kyrpides N.C."/>
            <person name="Ovchinnikova G."/>
            <person name="Kathariou S."/>
            <person name="Ramaley R.F."/>
            <person name="Rodrigues D.F."/>
            <person name="Hendrix C."/>
            <person name="Richardson P."/>
            <person name="Tiedje J.M."/>
        </authorList>
    </citation>
    <scope>NUCLEOTIDE SEQUENCE [LARGE SCALE GENOMIC DNA]</scope>
    <source>
        <strain>ATCC BAA-1283 / AT1b</strain>
    </source>
</reference>
<evidence type="ECO:0000255" key="1">
    <source>
        <dbReference type="HAMAP-Rule" id="MF_00159"/>
    </source>
</evidence>
<organism>
    <name type="scientific">Exiguobacterium sp. (strain ATCC BAA-1283 / AT1b)</name>
    <dbReference type="NCBI Taxonomy" id="360911"/>
    <lineage>
        <taxon>Bacteria</taxon>
        <taxon>Bacillati</taxon>
        <taxon>Bacillota</taxon>
        <taxon>Bacilli</taxon>
        <taxon>Bacillales</taxon>
        <taxon>Bacillales Family XII. Incertae Sedis</taxon>
        <taxon>Exiguobacterium</taxon>
    </lineage>
</organism>
<feature type="chain" id="PRO_1000203503" description="4-hydroxy-3-methylbut-2-en-1-yl diphosphate synthase (flavodoxin)">
    <location>
        <begin position="1"/>
        <end position="373"/>
    </location>
</feature>
<feature type="binding site" evidence="1">
    <location>
        <position position="268"/>
    </location>
    <ligand>
        <name>[4Fe-4S] cluster</name>
        <dbReference type="ChEBI" id="CHEBI:49883"/>
    </ligand>
</feature>
<feature type="binding site" evidence="1">
    <location>
        <position position="271"/>
    </location>
    <ligand>
        <name>[4Fe-4S] cluster</name>
        <dbReference type="ChEBI" id="CHEBI:49883"/>
    </ligand>
</feature>
<feature type="binding site" evidence="1">
    <location>
        <position position="303"/>
    </location>
    <ligand>
        <name>[4Fe-4S] cluster</name>
        <dbReference type="ChEBI" id="CHEBI:49883"/>
    </ligand>
</feature>
<feature type="binding site" evidence="1">
    <location>
        <position position="310"/>
    </location>
    <ligand>
        <name>[4Fe-4S] cluster</name>
        <dbReference type="ChEBI" id="CHEBI:49883"/>
    </ligand>
</feature>
<accession>C4L3K5</accession>
<keyword id="KW-0004">4Fe-4S</keyword>
<keyword id="KW-0408">Iron</keyword>
<keyword id="KW-0411">Iron-sulfur</keyword>
<keyword id="KW-0414">Isoprene biosynthesis</keyword>
<keyword id="KW-0479">Metal-binding</keyword>
<keyword id="KW-0560">Oxidoreductase</keyword>
<dbReference type="EC" id="1.17.7.3" evidence="1"/>
<dbReference type="EMBL" id="CP001615">
    <property type="protein sequence ID" value="ACQ69503.1"/>
    <property type="molecule type" value="Genomic_DNA"/>
</dbReference>
<dbReference type="RefSeq" id="WP_012726622.1">
    <property type="nucleotide sequence ID" value="NC_012673.1"/>
</dbReference>
<dbReference type="SMR" id="C4L3K5"/>
<dbReference type="STRING" id="360911.EAT1b_0571"/>
<dbReference type="GeneID" id="94371814"/>
<dbReference type="KEGG" id="eat:EAT1b_0571"/>
<dbReference type="eggNOG" id="COG0821">
    <property type="taxonomic scope" value="Bacteria"/>
</dbReference>
<dbReference type="HOGENOM" id="CLU_042258_0_0_9"/>
<dbReference type="OrthoDB" id="9803214at2"/>
<dbReference type="UniPathway" id="UPA00056">
    <property type="reaction ID" value="UER00096"/>
</dbReference>
<dbReference type="Proteomes" id="UP000000716">
    <property type="component" value="Chromosome"/>
</dbReference>
<dbReference type="GO" id="GO:0051539">
    <property type="term" value="F:4 iron, 4 sulfur cluster binding"/>
    <property type="evidence" value="ECO:0007669"/>
    <property type="project" value="UniProtKB-UniRule"/>
</dbReference>
<dbReference type="GO" id="GO:0046429">
    <property type="term" value="F:4-hydroxy-3-methylbut-2-en-1-yl diphosphate synthase activity (ferredoxin)"/>
    <property type="evidence" value="ECO:0007669"/>
    <property type="project" value="UniProtKB-UniRule"/>
</dbReference>
<dbReference type="GO" id="GO:0141197">
    <property type="term" value="F:4-hydroxy-3-methylbut-2-enyl-diphosphate synthase activity (flavodoxin)"/>
    <property type="evidence" value="ECO:0007669"/>
    <property type="project" value="UniProtKB-EC"/>
</dbReference>
<dbReference type="GO" id="GO:0005506">
    <property type="term" value="F:iron ion binding"/>
    <property type="evidence" value="ECO:0007669"/>
    <property type="project" value="InterPro"/>
</dbReference>
<dbReference type="GO" id="GO:0019288">
    <property type="term" value="P:isopentenyl diphosphate biosynthetic process, methylerythritol 4-phosphate pathway"/>
    <property type="evidence" value="ECO:0007669"/>
    <property type="project" value="UniProtKB-UniRule"/>
</dbReference>
<dbReference type="GO" id="GO:0016114">
    <property type="term" value="P:terpenoid biosynthetic process"/>
    <property type="evidence" value="ECO:0007669"/>
    <property type="project" value="InterPro"/>
</dbReference>
<dbReference type="FunFam" id="3.20.20.20:FF:000001">
    <property type="entry name" value="4-hydroxy-3-methylbut-2-en-1-yl diphosphate synthase (flavodoxin)"/>
    <property type="match status" value="1"/>
</dbReference>
<dbReference type="FunFam" id="3.30.413.10:FF:000005">
    <property type="entry name" value="4-hydroxy-3-methylbut-2-en-1-yl diphosphate synthase (flavodoxin)"/>
    <property type="match status" value="1"/>
</dbReference>
<dbReference type="Gene3D" id="3.20.20.20">
    <property type="entry name" value="Dihydropteroate synthase-like"/>
    <property type="match status" value="1"/>
</dbReference>
<dbReference type="Gene3D" id="3.30.413.10">
    <property type="entry name" value="Sulfite Reductase Hemoprotein, domain 1"/>
    <property type="match status" value="1"/>
</dbReference>
<dbReference type="HAMAP" id="MF_00159">
    <property type="entry name" value="IspG"/>
    <property type="match status" value="1"/>
</dbReference>
<dbReference type="InterPro" id="IPR011005">
    <property type="entry name" value="Dihydropteroate_synth-like_sf"/>
</dbReference>
<dbReference type="InterPro" id="IPR016425">
    <property type="entry name" value="IspG_bac"/>
</dbReference>
<dbReference type="InterPro" id="IPR004588">
    <property type="entry name" value="IspG_bac-typ"/>
</dbReference>
<dbReference type="InterPro" id="IPR045854">
    <property type="entry name" value="NO2/SO3_Rdtase_4Fe4S_sf"/>
</dbReference>
<dbReference type="NCBIfam" id="TIGR00612">
    <property type="entry name" value="ispG_gcpE"/>
    <property type="match status" value="1"/>
</dbReference>
<dbReference type="NCBIfam" id="NF001540">
    <property type="entry name" value="PRK00366.1"/>
    <property type="match status" value="1"/>
</dbReference>
<dbReference type="PANTHER" id="PTHR30454">
    <property type="entry name" value="4-HYDROXY-3-METHYLBUT-2-EN-1-YL DIPHOSPHATE SYNTHASE"/>
    <property type="match status" value="1"/>
</dbReference>
<dbReference type="PANTHER" id="PTHR30454:SF0">
    <property type="entry name" value="4-HYDROXY-3-METHYLBUT-2-EN-1-YL DIPHOSPHATE SYNTHASE (FERREDOXIN), CHLOROPLASTIC"/>
    <property type="match status" value="1"/>
</dbReference>
<dbReference type="Pfam" id="PF04551">
    <property type="entry name" value="GcpE"/>
    <property type="match status" value="1"/>
</dbReference>
<dbReference type="PIRSF" id="PIRSF004640">
    <property type="entry name" value="IspG"/>
    <property type="match status" value="1"/>
</dbReference>
<dbReference type="SUPFAM" id="SSF51717">
    <property type="entry name" value="Dihydropteroate synthetase-like"/>
    <property type="match status" value="1"/>
</dbReference>
<dbReference type="SUPFAM" id="SSF56014">
    <property type="entry name" value="Nitrite and sulphite reductase 4Fe-4S domain-like"/>
    <property type="match status" value="1"/>
</dbReference>
<gene>
    <name evidence="1" type="primary">ispG</name>
    <name type="ordered locus">EAT1b_0571</name>
</gene>
<comment type="function">
    <text evidence="1">Converts 2C-methyl-D-erythritol 2,4-cyclodiphosphate (ME-2,4cPP) into 1-hydroxy-2-methyl-2-(E)-butenyl 4-diphosphate.</text>
</comment>
<comment type="catalytic activity">
    <reaction evidence="1">
        <text>(2E)-4-hydroxy-3-methylbut-2-enyl diphosphate + oxidized [flavodoxin] + H2O + 2 H(+) = 2-C-methyl-D-erythritol 2,4-cyclic diphosphate + reduced [flavodoxin]</text>
        <dbReference type="Rhea" id="RHEA:43604"/>
        <dbReference type="Rhea" id="RHEA-COMP:10622"/>
        <dbReference type="Rhea" id="RHEA-COMP:10623"/>
        <dbReference type="ChEBI" id="CHEBI:15377"/>
        <dbReference type="ChEBI" id="CHEBI:15378"/>
        <dbReference type="ChEBI" id="CHEBI:57618"/>
        <dbReference type="ChEBI" id="CHEBI:58210"/>
        <dbReference type="ChEBI" id="CHEBI:58483"/>
        <dbReference type="ChEBI" id="CHEBI:128753"/>
        <dbReference type="EC" id="1.17.7.3"/>
    </reaction>
</comment>
<comment type="cofactor">
    <cofactor evidence="1">
        <name>[4Fe-4S] cluster</name>
        <dbReference type="ChEBI" id="CHEBI:49883"/>
    </cofactor>
    <text evidence="1">Binds 1 [4Fe-4S] cluster.</text>
</comment>
<comment type="pathway">
    <text evidence="1">Isoprenoid biosynthesis; isopentenyl diphosphate biosynthesis via DXP pathway; isopentenyl diphosphate from 1-deoxy-D-xylulose 5-phosphate: step 5/6.</text>
</comment>
<comment type="similarity">
    <text evidence="1">Belongs to the IspG family.</text>
</comment>
<proteinExistence type="inferred from homology"/>
<name>ISPG_EXISA</name>